<organism>
    <name type="scientific">Parageobacillus thermoglucosidasius</name>
    <name type="common">Geobacillus thermoglucosidasius</name>
    <dbReference type="NCBI Taxonomy" id="1426"/>
    <lineage>
        <taxon>Bacteria</taxon>
        <taxon>Bacillati</taxon>
        <taxon>Bacillota</taxon>
        <taxon>Bacilli</taxon>
        <taxon>Bacillales</taxon>
        <taxon>Anoxybacillaceae</taxon>
        <taxon>Parageobacillus</taxon>
    </lineage>
</organism>
<evidence type="ECO:0000255" key="1">
    <source>
        <dbReference type="HAMAP-Rule" id="MF_01152"/>
    </source>
</evidence>
<gene>
    <name evidence="1" type="primary">dnaJ</name>
</gene>
<feature type="chain" id="PRO_0000070729" description="Chaperone protein DnaJ">
    <location>
        <begin position="1"/>
        <end position="380"/>
    </location>
</feature>
<feature type="domain" description="J" evidence="1">
    <location>
        <begin position="5"/>
        <end position="69"/>
    </location>
</feature>
<feature type="repeat" description="CXXCXGXG motif">
    <location>
        <begin position="148"/>
        <end position="155"/>
    </location>
</feature>
<feature type="repeat" description="CXXCXGXG motif">
    <location>
        <begin position="165"/>
        <end position="172"/>
    </location>
</feature>
<feature type="repeat" description="CXXCXGXG motif">
    <location>
        <begin position="191"/>
        <end position="198"/>
    </location>
</feature>
<feature type="repeat" description="CXXCXGXG motif">
    <location>
        <begin position="205"/>
        <end position="212"/>
    </location>
</feature>
<feature type="zinc finger region" description="CR-type" evidence="1">
    <location>
        <begin position="135"/>
        <end position="217"/>
    </location>
</feature>
<feature type="binding site" evidence="1">
    <location>
        <position position="148"/>
    </location>
    <ligand>
        <name>Zn(2+)</name>
        <dbReference type="ChEBI" id="CHEBI:29105"/>
        <label>1</label>
    </ligand>
</feature>
<feature type="binding site" evidence="1">
    <location>
        <position position="151"/>
    </location>
    <ligand>
        <name>Zn(2+)</name>
        <dbReference type="ChEBI" id="CHEBI:29105"/>
        <label>1</label>
    </ligand>
</feature>
<feature type="binding site" evidence="1">
    <location>
        <position position="165"/>
    </location>
    <ligand>
        <name>Zn(2+)</name>
        <dbReference type="ChEBI" id="CHEBI:29105"/>
        <label>2</label>
    </ligand>
</feature>
<feature type="binding site" evidence="1">
    <location>
        <position position="168"/>
    </location>
    <ligand>
        <name>Zn(2+)</name>
        <dbReference type="ChEBI" id="CHEBI:29105"/>
        <label>2</label>
    </ligand>
</feature>
<feature type="binding site" evidence="1">
    <location>
        <position position="191"/>
    </location>
    <ligand>
        <name>Zn(2+)</name>
        <dbReference type="ChEBI" id="CHEBI:29105"/>
        <label>2</label>
    </ligand>
</feature>
<feature type="binding site" evidence="1">
    <location>
        <position position="194"/>
    </location>
    <ligand>
        <name>Zn(2+)</name>
        <dbReference type="ChEBI" id="CHEBI:29105"/>
        <label>2</label>
    </ligand>
</feature>
<feature type="binding site" evidence="1">
    <location>
        <position position="205"/>
    </location>
    <ligand>
        <name>Zn(2+)</name>
        <dbReference type="ChEBI" id="CHEBI:29105"/>
        <label>1</label>
    </ligand>
</feature>
<feature type="binding site" evidence="1">
    <location>
        <position position="208"/>
    </location>
    <ligand>
        <name>Zn(2+)</name>
        <dbReference type="ChEBI" id="CHEBI:29105"/>
        <label>1</label>
    </ligand>
</feature>
<sequence length="380" mass="42257">MAKRDYYEILGVSKNATKEEIKKAYRKLSKKYHPDINKEPDAAEKFKEIKEAYEVLSDDQKRAHYDQFGHADPNQGFGGFRSDDFDFGGFSGFSGFDDIFSTFFGGGRRRDPNAPRAGADLQYTMTLTFEEAVFGKETDIEIPREETCNTCHGTGAKPGTKKETCSYCHGTGQISTEQSTPFGRIVNRRTCPYCGGTGQYIKERCTTCGGTGRVKRRKKIHVKIPAGIDDGQQLRVAGQGEPGINGGPPGDLYIVFHVEPHEFFERDGDDIYCEIPLTFAQAALGDEIEVPTLHGKVRLKIPAGTQTGTKFRLKGKGVPNVRGYGYGDQHVIVRVVTPTKLTEKQKQLLREFDQLGGSSMHQGPHGRFFEKVKKAFKGES</sequence>
<keyword id="KW-0143">Chaperone</keyword>
<keyword id="KW-0963">Cytoplasm</keyword>
<keyword id="KW-0235">DNA replication</keyword>
<keyword id="KW-0479">Metal-binding</keyword>
<keyword id="KW-0677">Repeat</keyword>
<keyword id="KW-0346">Stress response</keyword>
<keyword id="KW-0862">Zinc</keyword>
<keyword id="KW-0863">Zinc-finger</keyword>
<name>DNAJ_PARTM</name>
<proteinExistence type="inferred from homology"/>
<comment type="function">
    <text evidence="1">Participates actively in the response to hyperosmotic and heat shock by preventing the aggregation of stress-denatured proteins and by disaggregating proteins, also in an autonomous, DnaK-independent fashion. Unfolded proteins bind initially to DnaJ; upon interaction with the DnaJ-bound protein, DnaK hydrolyzes its bound ATP, resulting in the formation of a stable complex. GrpE releases ADP from DnaK; ATP binding to DnaK triggers the release of the substrate protein, thus completing the reaction cycle. Several rounds of ATP-dependent interactions between DnaJ, DnaK and GrpE are required for fully efficient folding. Also involved, together with DnaK and GrpE, in the DNA replication of plasmids through activation of initiation proteins.</text>
</comment>
<comment type="cofactor">
    <cofactor evidence="1">
        <name>Zn(2+)</name>
        <dbReference type="ChEBI" id="CHEBI:29105"/>
    </cofactor>
    <text evidence="1">Binds 2 Zn(2+) ions per monomer.</text>
</comment>
<comment type="subunit">
    <text evidence="1">Homodimer.</text>
</comment>
<comment type="subcellular location">
    <subcellularLocation>
        <location evidence="1">Cytoplasm</location>
    </subcellularLocation>
</comment>
<comment type="domain">
    <text evidence="1">The J domain is necessary and sufficient to stimulate DnaK ATPase activity. Zinc center 1 plays an important role in the autonomous, DnaK-independent chaperone activity of DnaJ. Zinc center 2 is essential for interaction with DnaK and for DnaJ activity.</text>
</comment>
<comment type="similarity">
    <text evidence="1">Belongs to the DnaJ family.</text>
</comment>
<accession>Q9KWS6</accession>
<protein>
    <recommendedName>
        <fullName evidence="1">Chaperone protein DnaJ</fullName>
    </recommendedName>
</protein>
<reference key="1">
    <citation type="journal article" date="2000" name="Antonie Van Leeuwenhoek">
        <title>Features of dnaK operon genes of the obligate thermophile Bacillus thermoglucosidasius KP1006.</title>
        <authorList>
            <person name="Watanabe K."/>
            <person name="Iwashiro T."/>
            <person name="Suzuki Y."/>
        </authorList>
    </citation>
    <scope>NUCLEOTIDE SEQUENCE [GENOMIC DNA]</scope>
    <source>
        <strain>ATCC 43742 / DSM 2542 / NCIMB 11955 / NRRL B-14516 / KP 1006</strain>
    </source>
</reference>
<dbReference type="EMBL" id="AB017035">
    <property type="protein sequence ID" value="BAB03216.1"/>
    <property type="molecule type" value="Genomic_DNA"/>
</dbReference>
<dbReference type="RefSeq" id="WP_003249049.1">
    <property type="nucleotide sequence ID" value="NZ_QQOL01000017.1"/>
</dbReference>
<dbReference type="SMR" id="Q9KWS6"/>
<dbReference type="STRING" id="1426.AOT13_16985"/>
<dbReference type="GeneID" id="56927133"/>
<dbReference type="eggNOG" id="COG0484">
    <property type="taxonomic scope" value="Bacteria"/>
</dbReference>
<dbReference type="OrthoDB" id="9779889at2"/>
<dbReference type="GO" id="GO:0005737">
    <property type="term" value="C:cytoplasm"/>
    <property type="evidence" value="ECO:0007669"/>
    <property type="project" value="UniProtKB-SubCell"/>
</dbReference>
<dbReference type="GO" id="GO:0005524">
    <property type="term" value="F:ATP binding"/>
    <property type="evidence" value="ECO:0007669"/>
    <property type="project" value="InterPro"/>
</dbReference>
<dbReference type="GO" id="GO:0031072">
    <property type="term" value="F:heat shock protein binding"/>
    <property type="evidence" value="ECO:0007669"/>
    <property type="project" value="InterPro"/>
</dbReference>
<dbReference type="GO" id="GO:0051082">
    <property type="term" value="F:unfolded protein binding"/>
    <property type="evidence" value="ECO:0007669"/>
    <property type="project" value="UniProtKB-UniRule"/>
</dbReference>
<dbReference type="GO" id="GO:0008270">
    <property type="term" value="F:zinc ion binding"/>
    <property type="evidence" value="ECO:0007669"/>
    <property type="project" value="UniProtKB-UniRule"/>
</dbReference>
<dbReference type="GO" id="GO:0051085">
    <property type="term" value="P:chaperone cofactor-dependent protein refolding"/>
    <property type="evidence" value="ECO:0007669"/>
    <property type="project" value="TreeGrafter"/>
</dbReference>
<dbReference type="GO" id="GO:0006260">
    <property type="term" value="P:DNA replication"/>
    <property type="evidence" value="ECO:0007669"/>
    <property type="project" value="UniProtKB-KW"/>
</dbReference>
<dbReference type="GO" id="GO:0042026">
    <property type="term" value="P:protein refolding"/>
    <property type="evidence" value="ECO:0007669"/>
    <property type="project" value="TreeGrafter"/>
</dbReference>
<dbReference type="GO" id="GO:0009408">
    <property type="term" value="P:response to heat"/>
    <property type="evidence" value="ECO:0007669"/>
    <property type="project" value="InterPro"/>
</dbReference>
<dbReference type="CDD" id="cd06257">
    <property type="entry name" value="DnaJ"/>
    <property type="match status" value="1"/>
</dbReference>
<dbReference type="CDD" id="cd10747">
    <property type="entry name" value="DnaJ_C"/>
    <property type="match status" value="1"/>
</dbReference>
<dbReference type="CDD" id="cd10719">
    <property type="entry name" value="DnaJ_zf"/>
    <property type="match status" value="1"/>
</dbReference>
<dbReference type="FunFam" id="1.10.287.110:FF:000031">
    <property type="entry name" value="Molecular chaperone DnaJ"/>
    <property type="match status" value="1"/>
</dbReference>
<dbReference type="FunFam" id="2.10.230.10:FF:000002">
    <property type="entry name" value="Molecular chaperone DnaJ"/>
    <property type="match status" value="1"/>
</dbReference>
<dbReference type="FunFam" id="2.60.260.20:FF:000004">
    <property type="entry name" value="Molecular chaperone DnaJ"/>
    <property type="match status" value="1"/>
</dbReference>
<dbReference type="FunFam" id="2.60.260.20:FF:000009">
    <property type="entry name" value="Putative Mitochondrial DnaJ chaperone"/>
    <property type="match status" value="1"/>
</dbReference>
<dbReference type="Gene3D" id="1.10.287.110">
    <property type="entry name" value="DnaJ domain"/>
    <property type="match status" value="1"/>
</dbReference>
<dbReference type="Gene3D" id="2.10.230.10">
    <property type="entry name" value="Heat shock protein DnaJ, cysteine-rich domain"/>
    <property type="match status" value="1"/>
</dbReference>
<dbReference type="Gene3D" id="2.60.260.20">
    <property type="entry name" value="Urease metallochaperone UreE, N-terminal domain"/>
    <property type="match status" value="2"/>
</dbReference>
<dbReference type="HAMAP" id="MF_01152">
    <property type="entry name" value="DnaJ"/>
    <property type="match status" value="1"/>
</dbReference>
<dbReference type="InterPro" id="IPR012724">
    <property type="entry name" value="DnaJ"/>
</dbReference>
<dbReference type="InterPro" id="IPR002939">
    <property type="entry name" value="DnaJ_C"/>
</dbReference>
<dbReference type="InterPro" id="IPR001623">
    <property type="entry name" value="DnaJ_domain"/>
</dbReference>
<dbReference type="InterPro" id="IPR018253">
    <property type="entry name" value="DnaJ_domain_CS"/>
</dbReference>
<dbReference type="InterPro" id="IPR008971">
    <property type="entry name" value="HSP40/DnaJ_pept-bd"/>
</dbReference>
<dbReference type="InterPro" id="IPR001305">
    <property type="entry name" value="HSP_DnaJ_Cys-rich_dom"/>
</dbReference>
<dbReference type="InterPro" id="IPR036410">
    <property type="entry name" value="HSP_DnaJ_Cys-rich_dom_sf"/>
</dbReference>
<dbReference type="InterPro" id="IPR036869">
    <property type="entry name" value="J_dom_sf"/>
</dbReference>
<dbReference type="NCBIfam" id="TIGR02349">
    <property type="entry name" value="DnaJ_bact"/>
    <property type="match status" value="1"/>
</dbReference>
<dbReference type="NCBIfam" id="NF008035">
    <property type="entry name" value="PRK10767.1"/>
    <property type="match status" value="1"/>
</dbReference>
<dbReference type="NCBIfam" id="NF010869">
    <property type="entry name" value="PRK14276.1"/>
    <property type="match status" value="1"/>
</dbReference>
<dbReference type="NCBIfam" id="NF010873">
    <property type="entry name" value="PRK14280.1"/>
    <property type="match status" value="1"/>
</dbReference>
<dbReference type="PANTHER" id="PTHR43096:SF48">
    <property type="entry name" value="CHAPERONE PROTEIN DNAJ"/>
    <property type="match status" value="1"/>
</dbReference>
<dbReference type="PANTHER" id="PTHR43096">
    <property type="entry name" value="DNAJ HOMOLOG 1, MITOCHONDRIAL-RELATED"/>
    <property type="match status" value="1"/>
</dbReference>
<dbReference type="Pfam" id="PF00226">
    <property type="entry name" value="DnaJ"/>
    <property type="match status" value="1"/>
</dbReference>
<dbReference type="Pfam" id="PF01556">
    <property type="entry name" value="DnaJ_C"/>
    <property type="match status" value="1"/>
</dbReference>
<dbReference type="Pfam" id="PF00684">
    <property type="entry name" value="DnaJ_CXXCXGXG"/>
    <property type="match status" value="1"/>
</dbReference>
<dbReference type="PRINTS" id="PR00625">
    <property type="entry name" value="JDOMAIN"/>
</dbReference>
<dbReference type="SMART" id="SM00271">
    <property type="entry name" value="DnaJ"/>
    <property type="match status" value="1"/>
</dbReference>
<dbReference type="SUPFAM" id="SSF46565">
    <property type="entry name" value="Chaperone J-domain"/>
    <property type="match status" value="1"/>
</dbReference>
<dbReference type="SUPFAM" id="SSF57938">
    <property type="entry name" value="DnaJ/Hsp40 cysteine-rich domain"/>
    <property type="match status" value="1"/>
</dbReference>
<dbReference type="SUPFAM" id="SSF49493">
    <property type="entry name" value="HSP40/DnaJ peptide-binding domain"/>
    <property type="match status" value="2"/>
</dbReference>
<dbReference type="PROSITE" id="PS00636">
    <property type="entry name" value="DNAJ_1"/>
    <property type="match status" value="1"/>
</dbReference>
<dbReference type="PROSITE" id="PS50076">
    <property type="entry name" value="DNAJ_2"/>
    <property type="match status" value="1"/>
</dbReference>
<dbReference type="PROSITE" id="PS51188">
    <property type="entry name" value="ZF_CR"/>
    <property type="match status" value="1"/>
</dbReference>